<protein>
    <recommendedName>
        <fullName evidence="1">Glycine--tRNA ligase alpha subunit</fullName>
        <ecNumber evidence="1">6.1.1.14</ecNumber>
    </recommendedName>
    <alternativeName>
        <fullName evidence="1">Glycyl-tRNA synthetase alpha subunit</fullName>
        <shortName evidence="1">GlyRS</shortName>
    </alternativeName>
</protein>
<sequence length="305" mass="34964">MSKKLTFQEIILTLQQFWNDQGCMLMQAYDNEKGAGTMSPYTFLRAIGPEPWNAAYVEPSRRPADGRYGENPNRLYQHHQFQVVMKPSPSNIQELYLESLEKLGINPLEHDIRFVEDNWENPSTGSAGLGWEVWLDGMEITQFTYFQQVGGLATSPVTAEVTYGLERLASYIQEVDSVYDIEWADGVKYGEIFIQPEYEHSKYSFEISDQEMLLENFDKFEKEAGRALEEGLVHPAYDYVLKCSHTFNLLDARGAVSVTERAGYIARIRNLARVVAKTFVAERKRLGYPLLDEETRVKLLAEDAE</sequence>
<dbReference type="EC" id="6.1.1.14" evidence="1"/>
<dbReference type="EMBL" id="FM211187">
    <property type="protein sequence ID" value="CAR69230.1"/>
    <property type="molecule type" value="Genomic_DNA"/>
</dbReference>
<dbReference type="RefSeq" id="WP_000038750.1">
    <property type="nucleotide sequence ID" value="NC_011900.1"/>
</dbReference>
<dbReference type="SMR" id="B8ZL21"/>
<dbReference type="KEGG" id="sne:SPN23F14400"/>
<dbReference type="HOGENOM" id="CLU_057066_1_0_9"/>
<dbReference type="GO" id="GO:0005829">
    <property type="term" value="C:cytosol"/>
    <property type="evidence" value="ECO:0007669"/>
    <property type="project" value="TreeGrafter"/>
</dbReference>
<dbReference type="GO" id="GO:0005524">
    <property type="term" value="F:ATP binding"/>
    <property type="evidence" value="ECO:0007669"/>
    <property type="project" value="UniProtKB-UniRule"/>
</dbReference>
<dbReference type="GO" id="GO:0140096">
    <property type="term" value="F:catalytic activity, acting on a protein"/>
    <property type="evidence" value="ECO:0007669"/>
    <property type="project" value="UniProtKB-ARBA"/>
</dbReference>
<dbReference type="GO" id="GO:0004820">
    <property type="term" value="F:glycine-tRNA ligase activity"/>
    <property type="evidence" value="ECO:0007669"/>
    <property type="project" value="UniProtKB-UniRule"/>
</dbReference>
<dbReference type="GO" id="GO:0016740">
    <property type="term" value="F:transferase activity"/>
    <property type="evidence" value="ECO:0007669"/>
    <property type="project" value="UniProtKB-ARBA"/>
</dbReference>
<dbReference type="GO" id="GO:0006426">
    <property type="term" value="P:glycyl-tRNA aminoacylation"/>
    <property type="evidence" value="ECO:0007669"/>
    <property type="project" value="UniProtKB-UniRule"/>
</dbReference>
<dbReference type="CDD" id="cd00733">
    <property type="entry name" value="GlyRS_alpha_core"/>
    <property type="match status" value="1"/>
</dbReference>
<dbReference type="FunFam" id="3.30.930.10:FF:000006">
    <property type="entry name" value="Glycine--tRNA ligase alpha subunit"/>
    <property type="match status" value="1"/>
</dbReference>
<dbReference type="Gene3D" id="3.30.930.10">
    <property type="entry name" value="Bira Bifunctional Protein, Domain 2"/>
    <property type="match status" value="1"/>
</dbReference>
<dbReference type="Gene3D" id="1.20.58.180">
    <property type="entry name" value="Class II aaRS and biotin synthetases, domain 2"/>
    <property type="match status" value="1"/>
</dbReference>
<dbReference type="HAMAP" id="MF_00254">
    <property type="entry name" value="Gly_tRNA_synth_alpha"/>
    <property type="match status" value="1"/>
</dbReference>
<dbReference type="InterPro" id="IPR045864">
    <property type="entry name" value="aa-tRNA-synth_II/BPL/LPL"/>
</dbReference>
<dbReference type="InterPro" id="IPR006194">
    <property type="entry name" value="Gly-tRNA-synth_heterodimer"/>
</dbReference>
<dbReference type="InterPro" id="IPR002310">
    <property type="entry name" value="Gly-tRNA_ligase_asu"/>
</dbReference>
<dbReference type="NCBIfam" id="TIGR00388">
    <property type="entry name" value="glyQ"/>
    <property type="match status" value="1"/>
</dbReference>
<dbReference type="NCBIfam" id="NF006827">
    <property type="entry name" value="PRK09348.1"/>
    <property type="match status" value="1"/>
</dbReference>
<dbReference type="PANTHER" id="PTHR30075:SF2">
    <property type="entry name" value="GLYCINE--TRNA LIGASE, CHLOROPLASTIC_MITOCHONDRIAL 2"/>
    <property type="match status" value="1"/>
</dbReference>
<dbReference type="PANTHER" id="PTHR30075">
    <property type="entry name" value="GLYCYL-TRNA SYNTHETASE"/>
    <property type="match status" value="1"/>
</dbReference>
<dbReference type="Pfam" id="PF02091">
    <property type="entry name" value="tRNA-synt_2e"/>
    <property type="match status" value="1"/>
</dbReference>
<dbReference type="PRINTS" id="PR01044">
    <property type="entry name" value="TRNASYNTHGA"/>
</dbReference>
<dbReference type="SUPFAM" id="SSF55681">
    <property type="entry name" value="Class II aaRS and biotin synthetases"/>
    <property type="match status" value="1"/>
</dbReference>
<dbReference type="PROSITE" id="PS50861">
    <property type="entry name" value="AA_TRNA_LIGASE_II_GLYAB"/>
    <property type="match status" value="1"/>
</dbReference>
<proteinExistence type="inferred from homology"/>
<accession>B8ZL21</accession>
<feature type="chain" id="PRO_1000125558" description="Glycine--tRNA ligase alpha subunit">
    <location>
        <begin position="1"/>
        <end position="305"/>
    </location>
</feature>
<reference key="1">
    <citation type="journal article" date="2009" name="J. Bacteriol.">
        <title>Role of conjugative elements in the evolution of the multidrug-resistant pandemic clone Streptococcus pneumoniae Spain23F ST81.</title>
        <authorList>
            <person name="Croucher N.J."/>
            <person name="Walker D."/>
            <person name="Romero P."/>
            <person name="Lennard N."/>
            <person name="Paterson G.K."/>
            <person name="Bason N.C."/>
            <person name="Mitchell A.M."/>
            <person name="Quail M.A."/>
            <person name="Andrew P.W."/>
            <person name="Parkhill J."/>
            <person name="Bentley S.D."/>
            <person name="Mitchell T.J."/>
        </authorList>
    </citation>
    <scope>NUCLEOTIDE SEQUENCE [LARGE SCALE GENOMIC DNA]</scope>
    <source>
        <strain>ATCC 700669 / Spain 23F-1</strain>
    </source>
</reference>
<gene>
    <name evidence="1" type="primary">glyQ</name>
    <name type="ordered locus">SPN23F14400</name>
</gene>
<organism>
    <name type="scientific">Streptococcus pneumoniae (strain ATCC 700669 / Spain 23F-1)</name>
    <dbReference type="NCBI Taxonomy" id="561276"/>
    <lineage>
        <taxon>Bacteria</taxon>
        <taxon>Bacillati</taxon>
        <taxon>Bacillota</taxon>
        <taxon>Bacilli</taxon>
        <taxon>Lactobacillales</taxon>
        <taxon>Streptococcaceae</taxon>
        <taxon>Streptococcus</taxon>
    </lineage>
</organism>
<evidence type="ECO:0000255" key="1">
    <source>
        <dbReference type="HAMAP-Rule" id="MF_00254"/>
    </source>
</evidence>
<comment type="catalytic activity">
    <reaction evidence="1">
        <text>tRNA(Gly) + glycine + ATP = glycyl-tRNA(Gly) + AMP + diphosphate</text>
        <dbReference type="Rhea" id="RHEA:16013"/>
        <dbReference type="Rhea" id="RHEA-COMP:9664"/>
        <dbReference type="Rhea" id="RHEA-COMP:9683"/>
        <dbReference type="ChEBI" id="CHEBI:30616"/>
        <dbReference type="ChEBI" id="CHEBI:33019"/>
        <dbReference type="ChEBI" id="CHEBI:57305"/>
        <dbReference type="ChEBI" id="CHEBI:78442"/>
        <dbReference type="ChEBI" id="CHEBI:78522"/>
        <dbReference type="ChEBI" id="CHEBI:456215"/>
        <dbReference type="EC" id="6.1.1.14"/>
    </reaction>
</comment>
<comment type="subunit">
    <text evidence="1">Tetramer of two alpha and two beta subunits.</text>
</comment>
<comment type="subcellular location">
    <subcellularLocation>
        <location evidence="1">Cytoplasm</location>
    </subcellularLocation>
</comment>
<comment type="similarity">
    <text evidence="1">Belongs to the class-II aminoacyl-tRNA synthetase family.</text>
</comment>
<name>SYGA_STRPJ</name>
<keyword id="KW-0030">Aminoacyl-tRNA synthetase</keyword>
<keyword id="KW-0067">ATP-binding</keyword>
<keyword id="KW-0963">Cytoplasm</keyword>
<keyword id="KW-0436">Ligase</keyword>
<keyword id="KW-0547">Nucleotide-binding</keyword>
<keyword id="KW-0648">Protein biosynthesis</keyword>